<sequence>MPLTDPAKLQIVQQRVFLKKVCRKCGALNPIRATKCRRCHSTNLRLKKKELPTKKG</sequence>
<organism>
    <name type="scientific">Saccharolobus islandicus (strain M.16.4 / Kamchatka #3)</name>
    <name type="common">Sulfolobus islandicus</name>
    <dbReference type="NCBI Taxonomy" id="426118"/>
    <lineage>
        <taxon>Archaea</taxon>
        <taxon>Thermoproteota</taxon>
        <taxon>Thermoprotei</taxon>
        <taxon>Sulfolobales</taxon>
        <taxon>Sulfolobaceae</taxon>
        <taxon>Saccharolobus</taxon>
    </lineage>
</organism>
<name>RL40_SACI6</name>
<protein>
    <recommendedName>
        <fullName evidence="1">Large ribosomal subunit protein eL40</fullName>
    </recommendedName>
    <alternativeName>
        <fullName evidence="2">50S ribosomal protein L40e</fullName>
    </alternativeName>
</protein>
<gene>
    <name evidence="1" type="primary">rpl40e</name>
    <name type="ordered locus">M164_2821</name>
</gene>
<proteinExistence type="inferred from homology"/>
<evidence type="ECO:0000255" key="1">
    <source>
        <dbReference type="HAMAP-Rule" id="MF_00788"/>
    </source>
</evidence>
<evidence type="ECO:0000305" key="2"/>
<keyword id="KW-0687">Ribonucleoprotein</keyword>
<keyword id="KW-0689">Ribosomal protein</keyword>
<comment type="similarity">
    <text evidence="1">Belongs to the eukaryotic ribosomal protein eL40 family.</text>
</comment>
<accession>C4KJ13</accession>
<reference key="1">
    <citation type="journal article" date="2009" name="Proc. Natl. Acad. Sci. U.S.A.">
        <title>Biogeography of the Sulfolobus islandicus pan-genome.</title>
        <authorList>
            <person name="Reno M.L."/>
            <person name="Held N.L."/>
            <person name="Fields C.J."/>
            <person name="Burke P.V."/>
            <person name="Whitaker R.J."/>
        </authorList>
    </citation>
    <scope>NUCLEOTIDE SEQUENCE [LARGE SCALE GENOMIC DNA]</scope>
    <source>
        <strain>M.16.4 / Kamchatka #3</strain>
    </source>
</reference>
<feature type="chain" id="PRO_1000212949" description="Large ribosomal subunit protein eL40">
    <location>
        <begin position="1"/>
        <end position="56"/>
    </location>
</feature>
<dbReference type="EMBL" id="CP001402">
    <property type="protein sequence ID" value="ACR42577.1"/>
    <property type="molecule type" value="Genomic_DNA"/>
</dbReference>
<dbReference type="SMR" id="C4KJ13"/>
<dbReference type="KEGG" id="sid:M164_2821"/>
<dbReference type="HOGENOM" id="CLU_175093_1_0_2"/>
<dbReference type="Proteomes" id="UP000001479">
    <property type="component" value="Chromosome"/>
</dbReference>
<dbReference type="GO" id="GO:1990904">
    <property type="term" value="C:ribonucleoprotein complex"/>
    <property type="evidence" value="ECO:0007669"/>
    <property type="project" value="UniProtKB-KW"/>
</dbReference>
<dbReference type="GO" id="GO:0005840">
    <property type="term" value="C:ribosome"/>
    <property type="evidence" value="ECO:0007669"/>
    <property type="project" value="UniProtKB-KW"/>
</dbReference>
<dbReference type="GO" id="GO:0003735">
    <property type="term" value="F:structural constituent of ribosome"/>
    <property type="evidence" value="ECO:0007669"/>
    <property type="project" value="InterPro"/>
</dbReference>
<dbReference type="GO" id="GO:0006412">
    <property type="term" value="P:translation"/>
    <property type="evidence" value="ECO:0007669"/>
    <property type="project" value="UniProtKB-UniRule"/>
</dbReference>
<dbReference type="Gene3D" id="4.10.1060.50">
    <property type="match status" value="1"/>
</dbReference>
<dbReference type="HAMAP" id="MF_00788">
    <property type="entry name" value="Ribosomal_eL40"/>
    <property type="match status" value="1"/>
</dbReference>
<dbReference type="InterPro" id="IPR023657">
    <property type="entry name" value="Ribosomal_eL40_arc"/>
</dbReference>
<dbReference type="InterPro" id="IPR001975">
    <property type="entry name" value="Ribosomal_eL40_dom"/>
</dbReference>
<dbReference type="InterPro" id="IPR038587">
    <property type="entry name" value="Ribosomal_eL40_sf"/>
</dbReference>
<dbReference type="InterPro" id="IPR011332">
    <property type="entry name" value="Ribosomal_zn-bd"/>
</dbReference>
<dbReference type="NCBIfam" id="NF003161">
    <property type="entry name" value="PRK04136.1"/>
    <property type="match status" value="1"/>
</dbReference>
<dbReference type="PANTHER" id="PTHR39649">
    <property type="entry name" value="50S RIBOSOMAL PROTEIN L40E"/>
    <property type="match status" value="1"/>
</dbReference>
<dbReference type="PANTHER" id="PTHR39649:SF1">
    <property type="entry name" value="LARGE RIBOSOMAL SUBUNIT PROTEIN EL40"/>
    <property type="match status" value="1"/>
</dbReference>
<dbReference type="Pfam" id="PF01020">
    <property type="entry name" value="Ribosomal_L40e"/>
    <property type="match status" value="1"/>
</dbReference>
<dbReference type="SMART" id="SM01377">
    <property type="entry name" value="Ribosomal_L40e"/>
    <property type="match status" value="1"/>
</dbReference>
<dbReference type="SUPFAM" id="SSF57829">
    <property type="entry name" value="Zn-binding ribosomal proteins"/>
    <property type="match status" value="1"/>
</dbReference>